<protein>
    <recommendedName>
        <fullName>T-cell surface glycoprotein CD5</fullName>
    </recommendedName>
    <cdAntigenName>CD5</cdAntigenName>
</protein>
<evidence type="ECO:0000250" key="1"/>
<evidence type="ECO:0000250" key="2">
    <source>
        <dbReference type="UniProtKB" id="P06127"/>
    </source>
</evidence>
<evidence type="ECO:0000250" key="3">
    <source>
        <dbReference type="UniProtKB" id="P13379"/>
    </source>
</evidence>
<evidence type="ECO:0000255" key="4"/>
<evidence type="ECO:0000255" key="5">
    <source>
        <dbReference type="PROSITE-ProRule" id="PRU00196"/>
    </source>
</evidence>
<evidence type="ECO:0000256" key="6">
    <source>
        <dbReference type="SAM" id="MobiDB-lite"/>
    </source>
</evidence>
<evidence type="ECO:0000305" key="7"/>
<reference key="1">
    <citation type="journal article" date="1992" name="Sapporo Igaku Zasshi">
        <title>Structure and expression of the Rat Homologue of CD5.</title>
        <authorList>
            <person name="Murakami T."/>
            <person name="Matsuura A."/>
        </authorList>
    </citation>
    <scope>NUCLEOTIDE SEQUENCE [MRNA]</scope>
</reference>
<reference key="2">
    <citation type="journal article" date="1994" name="Eur. J. Immunol.">
        <title>MRC OX19 recognizes the rat CD5 surface glycoprotein, but does not provide evidence for a population of CD5bright B cells.</title>
        <authorList>
            <person name="Vermeer L.A."/>
            <person name="Boer de N.K."/>
            <person name="Bucci C."/>
            <person name="Bos N.A."/>
            <person name="Kroese F.G.M."/>
            <person name="Alberti S."/>
        </authorList>
    </citation>
    <scope>NUCLEOTIDE SEQUENCE [MRNA]</scope>
    <source>
        <strain>PVG</strain>
    </source>
</reference>
<accession>P51882</accession>
<accession>Q63098</accession>
<comment type="function">
    <text evidence="2 3">Lymphoid-specific receptor expressed by all T-cells and in a subset of B-cells known as B1a cells. Plays a role in the regulation of TCR and BCR signaling, thymocyte selection, T-cell effector differentiation and immune tolerance. Acts by interacting with several ligands expressed on B-cells such as CD5L or CD72 and thereby plays an important role in contact-mediated, T-dependent B-cell activation and in the maintenance of regulatory T and B-cell homeostasis. Functions as a negative regulator of TCR signaling during thymocyte development by associating with several signaling proteins including LCK, CD3Z chain, PI3K or CBL (By similarity). Mechanistically, co-engagement of CD3 with CD5 enhances phosphorylated CBL recruitment leading to increased VAV1 phosphorylation and degradation (By similarity). Modulates B-cell biology through ERK1/2 activation in a Ca(2+)-dependent pathway via the non-selective Ca(2+) channel TRPC1, leading to IL-10 production (By similarity).</text>
</comment>
<comment type="subunit">
    <text evidence="2 3">Interacts with CD72/LYB-2 (By similarity). Interacts with PTPN6/SHP-1. Interacts with CBL (By similarity). Interacts with CD5L (By similarity).</text>
</comment>
<comment type="subcellular location">
    <subcellularLocation>
        <location evidence="3">Cell membrane</location>
        <topology evidence="3">Single-pass type I membrane protein</topology>
    </subcellularLocation>
</comment>
<comment type="PTM">
    <text evidence="2 3">Phosphorylated on serine, threonine and tyrosine residues following TCR stimulation. Phosphorylated by LCK on Tyr-449 and Tyr-483 upon TCR engagement.</text>
</comment>
<gene>
    <name type="primary">Cd5</name>
</gene>
<organism>
    <name type="scientific">Rattus norvegicus</name>
    <name type="common">Rat</name>
    <dbReference type="NCBI Taxonomy" id="10116"/>
    <lineage>
        <taxon>Eukaryota</taxon>
        <taxon>Metazoa</taxon>
        <taxon>Chordata</taxon>
        <taxon>Craniata</taxon>
        <taxon>Vertebrata</taxon>
        <taxon>Euteleostomi</taxon>
        <taxon>Mammalia</taxon>
        <taxon>Eutheria</taxon>
        <taxon>Euarchontoglires</taxon>
        <taxon>Glires</taxon>
        <taxon>Rodentia</taxon>
        <taxon>Myomorpha</taxon>
        <taxon>Muroidea</taxon>
        <taxon>Muridae</taxon>
        <taxon>Murinae</taxon>
        <taxon>Rattus</taxon>
    </lineage>
</organism>
<feature type="signal peptide" evidence="1">
    <location>
        <begin position="1"/>
        <end position="23"/>
    </location>
</feature>
<feature type="chain" id="PRO_0000033224" description="T-cell surface glycoprotein CD5">
    <location>
        <begin position="24"/>
        <end position="491"/>
    </location>
</feature>
<feature type="topological domain" description="Extracellular" evidence="4">
    <location>
        <begin position="25"/>
        <end position="368"/>
    </location>
</feature>
<feature type="transmembrane region" description="Helical" evidence="4">
    <location>
        <begin position="369"/>
        <end position="398"/>
    </location>
</feature>
<feature type="topological domain" description="Cytoplasmic" evidence="4">
    <location>
        <begin position="399"/>
        <end position="491"/>
    </location>
</feature>
<feature type="domain" description="SRCR 1" evidence="5">
    <location>
        <begin position="34"/>
        <end position="131"/>
    </location>
</feature>
<feature type="domain" description="SRCR 2" evidence="5">
    <location>
        <begin position="157"/>
        <end position="266"/>
    </location>
</feature>
<feature type="domain" description="SRCR 3" evidence="5">
    <location>
        <begin position="274"/>
        <end position="364"/>
    </location>
</feature>
<feature type="region of interest" description="Disordered" evidence="6">
    <location>
        <begin position="467"/>
        <end position="491"/>
    </location>
</feature>
<feature type="compositionally biased region" description="Polar residues" evidence="6">
    <location>
        <begin position="470"/>
        <end position="480"/>
    </location>
</feature>
<feature type="modified residue" description="Phosphoserine" evidence="2">
    <location>
        <position position="435"/>
    </location>
</feature>
<feature type="modified residue" description="Phosphotyrosine" evidence="2">
    <location>
        <position position="449"/>
    </location>
</feature>
<feature type="modified residue" description="Phosphoserine" evidence="2">
    <location>
        <position position="456"/>
    </location>
</feature>
<feature type="modified residue" description="Phosphoserine" evidence="2">
    <location>
        <position position="479"/>
    </location>
</feature>
<feature type="modified residue" description="Phosphoserine" evidence="2">
    <location>
        <position position="481"/>
    </location>
</feature>
<feature type="glycosylation site" description="N-linked (GlcNAc...) asparagine" evidence="4">
    <location>
        <position position="114"/>
    </location>
</feature>
<feature type="glycosylation site" description="N-linked (GlcNAc...) asparagine" evidence="4">
    <location>
        <position position="176"/>
    </location>
</feature>
<feature type="glycosylation site" description="N-linked (GlcNAc...) asparagine" evidence="4">
    <location>
        <position position="239"/>
    </location>
</feature>
<feature type="disulfide bond" evidence="5">
    <location>
        <begin position="43"/>
        <end position="84"/>
    </location>
</feature>
<feature type="disulfide bond" evidence="5">
    <location>
        <begin position="58"/>
        <end position="123"/>
    </location>
</feature>
<feature type="disulfide bond" evidence="5">
    <location>
        <begin position="79"/>
        <end position="130"/>
    </location>
</feature>
<feature type="disulfide bond" evidence="5">
    <location>
        <begin position="105"/>
        <end position="115"/>
    </location>
</feature>
<feature type="disulfide bond" evidence="5">
    <location>
        <begin position="199"/>
        <end position="265"/>
    </location>
</feature>
<feature type="disulfide bond" evidence="5">
    <location>
        <begin position="242"/>
        <end position="248"/>
    </location>
</feature>
<feature type="disulfide bond" evidence="5">
    <location>
        <begin position="283"/>
        <end position="319"/>
    </location>
</feature>
<feature type="disulfide bond" evidence="5">
    <location>
        <begin position="299"/>
        <end position="356"/>
    </location>
</feature>
<feature type="disulfide bond" evidence="5">
    <location>
        <begin position="314"/>
        <end position="363"/>
    </location>
</feature>
<feature type="disulfide bond" evidence="5">
    <location>
        <begin position="339"/>
        <end position="347"/>
    </location>
</feature>
<feature type="sequence conflict" description="In Ref. 2." evidence="7" ref="2">
    <original>R</original>
    <variation>RDGPGKKEHEKGR</variation>
    <location>
        <position position="27"/>
    </location>
</feature>
<feature type="sequence conflict" description="In Ref. 2; CAA55586." evidence="7" ref="2">
    <original>GTPAPA</original>
    <variation>ELQLCS</variation>
    <location>
        <begin position="218"/>
        <end position="223"/>
    </location>
</feature>
<feature type="sequence conflict" description="In Ref. 2; CAA55586." evidence="7" ref="2">
    <original>GLA</original>
    <variation>AW</variation>
    <location>
        <begin position="370"/>
        <end position="372"/>
    </location>
</feature>
<feature type="sequence conflict" description="In Ref. 2; CAA55586." evidence="7" ref="2">
    <original>V</original>
    <variation>M</variation>
    <location>
        <position position="445"/>
    </location>
</feature>
<feature type="sequence conflict" description="In Ref. 2; CAA55586." evidence="7" ref="2">
    <original>RL</original>
    <variation>W</variation>
    <location>
        <begin position="457"/>
        <end position="458"/>
    </location>
</feature>
<feature type="sequence conflict" description="In Ref. 2; CAA55586." evidence="7" ref="2">
    <original>R</original>
    <variation>K</variation>
    <location>
        <position position="490"/>
    </location>
</feature>
<keyword id="KW-1003">Cell membrane</keyword>
<keyword id="KW-1015">Disulfide bond</keyword>
<keyword id="KW-0325">Glycoprotein</keyword>
<keyword id="KW-0472">Membrane</keyword>
<keyword id="KW-0597">Phosphoprotein</keyword>
<keyword id="KW-0675">Receptor</keyword>
<keyword id="KW-1185">Reference proteome</keyword>
<keyword id="KW-0677">Repeat</keyword>
<keyword id="KW-0732">Signal</keyword>
<keyword id="KW-0812">Transmembrane</keyword>
<keyword id="KW-1133">Transmembrane helix</keyword>
<sequence>MDSHEVLLAATYLLGTLAAFCLGQSGRGFVGAQVMLSGSNSKCQGLVEVQMNGMKTVCSSSWRLSQDLWKNANEASTVCQQLGCGNPLALGHLTLWNRPKNQILCQGPPWSFSNCSTSSLGQCLPLSLVCLEPQKTTPLPTTTLPTTMPEPTAPPRLQLVPGHEGLRCTGVVEFYNGSRGGTILYKAKARPVDLGNLICKSLQCGSFLTHLSRIETAGTPAPAELRDPRPLPIRWEAQNGSCTSLQQCFQKTTVQEGSQALAVVCSDFQPKVQSRLVGGSSVCEGIAEVRQRSQWAALCDSSAARGPGRWEELCQEQQCGNLISFHVMDADRTSPGVLCTQEKLSQCYQLQKKTHCKRVFITCKDPNPVGLAPGTVASIILTLVLLVVLMVMCGPLIYKKLVKKFRQKKQRQWIGPTGVNQSMSFHRSHTATVRSQVENPAASHVDNEYSQPPRNSRLSAYPALEGALHRSSTQPDNSSDSDYDLQVAQRL</sequence>
<name>CD5_RAT</name>
<dbReference type="EMBL" id="D10728">
    <property type="protein sequence ID" value="BAA01571.1"/>
    <property type="molecule type" value="mRNA"/>
</dbReference>
<dbReference type="EMBL" id="X78985">
    <property type="protein sequence ID" value="CAA55586.1"/>
    <property type="molecule type" value="mRNA"/>
</dbReference>
<dbReference type="PIR" id="S43536">
    <property type="entry name" value="S43536"/>
</dbReference>
<dbReference type="RefSeq" id="NP_062168.1">
    <property type="nucleotide sequence ID" value="NM_019295.1"/>
</dbReference>
<dbReference type="SMR" id="P51882"/>
<dbReference type="FunCoup" id="P51882">
    <property type="interactions" value="141"/>
</dbReference>
<dbReference type="STRING" id="10116.ENSRNOP00000070123"/>
<dbReference type="GlyCosmos" id="P51882">
    <property type="glycosylation" value="3 sites, No reported glycans"/>
</dbReference>
<dbReference type="GlyGen" id="P51882">
    <property type="glycosylation" value="4 sites"/>
</dbReference>
<dbReference type="iPTMnet" id="P51882"/>
<dbReference type="PhosphoSitePlus" id="P51882"/>
<dbReference type="PaxDb" id="10116-ENSRNOP00000051697"/>
<dbReference type="GeneID" id="54236"/>
<dbReference type="KEGG" id="rno:54236"/>
<dbReference type="UCSC" id="RGD:2309">
    <property type="organism name" value="rat"/>
</dbReference>
<dbReference type="AGR" id="RGD:2309"/>
<dbReference type="CTD" id="921"/>
<dbReference type="RGD" id="2309">
    <property type="gene designation" value="Cd5"/>
</dbReference>
<dbReference type="VEuPathDB" id="HostDB:ENSRNOG00000020872"/>
<dbReference type="eggNOG" id="ENOG502RYTM">
    <property type="taxonomic scope" value="Eukaryota"/>
</dbReference>
<dbReference type="InParanoid" id="P51882"/>
<dbReference type="PhylomeDB" id="P51882"/>
<dbReference type="PRO" id="PR:P51882"/>
<dbReference type="Proteomes" id="UP000002494">
    <property type="component" value="Chromosome 1"/>
</dbReference>
<dbReference type="Bgee" id="ENSRNOG00000020872">
    <property type="expression patterns" value="Expressed in thymus and 11 other cell types or tissues"/>
</dbReference>
<dbReference type="ExpressionAtlas" id="P51882">
    <property type="expression patterns" value="baseline and differential"/>
</dbReference>
<dbReference type="GO" id="GO:0009986">
    <property type="term" value="C:cell surface"/>
    <property type="evidence" value="ECO:0000314"/>
    <property type="project" value="RGD"/>
</dbReference>
<dbReference type="GO" id="GO:0009897">
    <property type="term" value="C:external side of plasma membrane"/>
    <property type="evidence" value="ECO:0000266"/>
    <property type="project" value="RGD"/>
</dbReference>
<dbReference type="GO" id="GO:0005886">
    <property type="term" value="C:plasma membrane"/>
    <property type="evidence" value="ECO:0000266"/>
    <property type="project" value="RGD"/>
</dbReference>
<dbReference type="GO" id="GO:0097190">
    <property type="term" value="P:apoptotic signaling pathway"/>
    <property type="evidence" value="ECO:0000266"/>
    <property type="project" value="RGD"/>
</dbReference>
<dbReference type="GO" id="GO:0031295">
    <property type="term" value="P:T cell costimulation"/>
    <property type="evidence" value="ECO:0000266"/>
    <property type="project" value="RGD"/>
</dbReference>
<dbReference type="FunFam" id="3.10.250.10:FF:000028">
    <property type="entry name" value="T-cell surface glycoprotein CD5"/>
    <property type="match status" value="1"/>
</dbReference>
<dbReference type="FunFam" id="3.10.250.10:FF:000030">
    <property type="entry name" value="T-cell surface glycoprotein CD5"/>
    <property type="match status" value="1"/>
</dbReference>
<dbReference type="Gene3D" id="3.10.250.10">
    <property type="entry name" value="SRCR-like domain"/>
    <property type="match status" value="2"/>
</dbReference>
<dbReference type="InterPro" id="IPR001190">
    <property type="entry name" value="SRCR"/>
</dbReference>
<dbReference type="InterPro" id="IPR036772">
    <property type="entry name" value="SRCR-like_dom_sf"/>
</dbReference>
<dbReference type="InterPro" id="IPR003566">
    <property type="entry name" value="Tcell_CD5"/>
</dbReference>
<dbReference type="PANTHER" id="PTHR47309">
    <property type="entry name" value="T-CELL SURFACE GLYCOPROTEIN CD5"/>
    <property type="match status" value="1"/>
</dbReference>
<dbReference type="PANTHER" id="PTHR47309:SF1">
    <property type="entry name" value="T-CELL SURFACE GLYCOPROTEIN CD5"/>
    <property type="match status" value="1"/>
</dbReference>
<dbReference type="Pfam" id="PF00530">
    <property type="entry name" value="SRCR"/>
    <property type="match status" value="1"/>
</dbReference>
<dbReference type="PRINTS" id="PR00258">
    <property type="entry name" value="SPERACTRCPTR"/>
</dbReference>
<dbReference type="PRINTS" id="PR01409">
    <property type="entry name" value="TCELLCD5"/>
</dbReference>
<dbReference type="SMART" id="SM00202">
    <property type="entry name" value="SR"/>
    <property type="match status" value="1"/>
</dbReference>
<dbReference type="SUPFAM" id="SSF56487">
    <property type="entry name" value="SRCR-like"/>
    <property type="match status" value="2"/>
</dbReference>
<dbReference type="PROSITE" id="PS50287">
    <property type="entry name" value="SRCR_2"/>
    <property type="match status" value="3"/>
</dbReference>
<proteinExistence type="evidence at transcript level"/>